<name>RIMO_BURM9</name>
<sequence>MENSLKSSGKPLAAPKVGMVSLGCPKALVDSEQIITQLRAEGYEISGTYDGADLVVVNTCGFIDEAVQESLDAIGEALAENGKVIVTGCLGAKKSASGSGLIAEVHPKVLAVTGPHAVGEVMQAVHSHLPKPHDPFVDLVPAAGIKLTPRHYAYLKISEGCNHRCSFCIIPSMRGELVSRPVAEVMLEAENLFKSGVKELLVISQDTSAYGVDVKYRTGFWNGRPLKTRMTELVGALGELAAQYGAWVRLHYVYPYPHVDEIIPMMAQGPLKGHVLPYLDVPFQHAHPEVLKRMKRLANAERVLERVQKWREICPDLTIRSTFIAGFPGETDAQFETLLDFIREAELDRVGCFAYSPVEGASANALDGALPDDVREARRARFMEVAEEVSAARIARKIGKTLKVLIDEVNAEGGIGRTAADAPEIDGVVYVEPAAKASKRYKVGEFVSVKITGADGHDLWGEV</sequence>
<keyword id="KW-0004">4Fe-4S</keyword>
<keyword id="KW-0963">Cytoplasm</keyword>
<keyword id="KW-0408">Iron</keyword>
<keyword id="KW-0411">Iron-sulfur</keyword>
<keyword id="KW-0479">Metal-binding</keyword>
<keyword id="KW-0949">S-adenosyl-L-methionine</keyword>
<keyword id="KW-0808">Transferase</keyword>
<gene>
    <name evidence="1" type="primary">rimO</name>
    <name type="ordered locus">BMA10229_A0089</name>
</gene>
<dbReference type="EC" id="2.8.4.4" evidence="1"/>
<dbReference type="EMBL" id="CP000546">
    <property type="protein sequence ID" value="ABN02171.1"/>
    <property type="molecule type" value="Genomic_DNA"/>
</dbReference>
<dbReference type="RefSeq" id="WP_004193503.1">
    <property type="nucleotide sequence ID" value="NC_008836.1"/>
</dbReference>
<dbReference type="SMR" id="A2S2C9"/>
<dbReference type="GeneID" id="92979051"/>
<dbReference type="KEGG" id="bml:BMA10229_A0089"/>
<dbReference type="HOGENOM" id="CLU_018697_0_0_4"/>
<dbReference type="Proteomes" id="UP000002283">
    <property type="component" value="Chromosome I"/>
</dbReference>
<dbReference type="GO" id="GO:0005829">
    <property type="term" value="C:cytosol"/>
    <property type="evidence" value="ECO:0007669"/>
    <property type="project" value="TreeGrafter"/>
</dbReference>
<dbReference type="GO" id="GO:0051539">
    <property type="term" value="F:4 iron, 4 sulfur cluster binding"/>
    <property type="evidence" value="ECO:0007669"/>
    <property type="project" value="UniProtKB-UniRule"/>
</dbReference>
<dbReference type="GO" id="GO:0035599">
    <property type="term" value="F:aspartic acid methylthiotransferase activity"/>
    <property type="evidence" value="ECO:0007669"/>
    <property type="project" value="TreeGrafter"/>
</dbReference>
<dbReference type="GO" id="GO:0046872">
    <property type="term" value="F:metal ion binding"/>
    <property type="evidence" value="ECO:0007669"/>
    <property type="project" value="UniProtKB-KW"/>
</dbReference>
<dbReference type="GO" id="GO:0103039">
    <property type="term" value="F:protein methylthiotransferase activity"/>
    <property type="evidence" value="ECO:0007669"/>
    <property type="project" value="UniProtKB-EC"/>
</dbReference>
<dbReference type="GO" id="GO:0006400">
    <property type="term" value="P:tRNA modification"/>
    <property type="evidence" value="ECO:0007669"/>
    <property type="project" value="InterPro"/>
</dbReference>
<dbReference type="CDD" id="cd01335">
    <property type="entry name" value="Radical_SAM"/>
    <property type="match status" value="1"/>
</dbReference>
<dbReference type="FunFam" id="3.40.50.12160:FF:000002">
    <property type="entry name" value="Ribosomal protein S12 methylthiotransferase RimO"/>
    <property type="match status" value="1"/>
</dbReference>
<dbReference type="FunFam" id="3.80.30.20:FF:000001">
    <property type="entry name" value="tRNA-2-methylthio-N(6)-dimethylallyladenosine synthase 2"/>
    <property type="match status" value="1"/>
</dbReference>
<dbReference type="Gene3D" id="3.40.50.12160">
    <property type="entry name" value="Methylthiotransferase, N-terminal domain"/>
    <property type="match status" value="1"/>
</dbReference>
<dbReference type="Gene3D" id="2.40.50.140">
    <property type="entry name" value="Nucleic acid-binding proteins"/>
    <property type="match status" value="1"/>
</dbReference>
<dbReference type="Gene3D" id="3.80.30.20">
    <property type="entry name" value="tm_1862 like domain"/>
    <property type="match status" value="1"/>
</dbReference>
<dbReference type="HAMAP" id="MF_01865">
    <property type="entry name" value="MTTase_RimO"/>
    <property type="match status" value="1"/>
</dbReference>
<dbReference type="InterPro" id="IPR006638">
    <property type="entry name" value="Elp3/MiaA/NifB-like_rSAM"/>
</dbReference>
<dbReference type="InterPro" id="IPR005839">
    <property type="entry name" value="Methylthiotransferase"/>
</dbReference>
<dbReference type="InterPro" id="IPR020612">
    <property type="entry name" value="Methylthiotransferase_CS"/>
</dbReference>
<dbReference type="InterPro" id="IPR013848">
    <property type="entry name" value="Methylthiotransferase_N"/>
</dbReference>
<dbReference type="InterPro" id="IPR038135">
    <property type="entry name" value="Methylthiotransferase_N_sf"/>
</dbReference>
<dbReference type="InterPro" id="IPR012340">
    <property type="entry name" value="NA-bd_OB-fold"/>
</dbReference>
<dbReference type="InterPro" id="IPR005840">
    <property type="entry name" value="Ribosomal_uS12_MeSTrfase_RimO"/>
</dbReference>
<dbReference type="InterPro" id="IPR007197">
    <property type="entry name" value="rSAM"/>
</dbReference>
<dbReference type="InterPro" id="IPR023404">
    <property type="entry name" value="rSAM_horseshoe"/>
</dbReference>
<dbReference type="InterPro" id="IPR002792">
    <property type="entry name" value="TRAM_dom"/>
</dbReference>
<dbReference type="NCBIfam" id="TIGR01125">
    <property type="entry name" value="30S ribosomal protein S12 methylthiotransferase RimO"/>
    <property type="match status" value="1"/>
</dbReference>
<dbReference type="NCBIfam" id="TIGR00089">
    <property type="entry name" value="MiaB/RimO family radical SAM methylthiotransferase"/>
    <property type="match status" value="1"/>
</dbReference>
<dbReference type="PANTHER" id="PTHR43837">
    <property type="entry name" value="RIBOSOMAL PROTEIN S12 METHYLTHIOTRANSFERASE RIMO"/>
    <property type="match status" value="1"/>
</dbReference>
<dbReference type="PANTHER" id="PTHR43837:SF1">
    <property type="entry name" value="RIBOSOMAL PROTEIN US12 METHYLTHIOTRANSFERASE RIMO"/>
    <property type="match status" value="1"/>
</dbReference>
<dbReference type="Pfam" id="PF04055">
    <property type="entry name" value="Radical_SAM"/>
    <property type="match status" value="1"/>
</dbReference>
<dbReference type="Pfam" id="PF18693">
    <property type="entry name" value="TRAM_2"/>
    <property type="match status" value="1"/>
</dbReference>
<dbReference type="Pfam" id="PF00919">
    <property type="entry name" value="UPF0004"/>
    <property type="match status" value="1"/>
</dbReference>
<dbReference type="SFLD" id="SFLDG01082">
    <property type="entry name" value="B12-binding_domain_containing"/>
    <property type="match status" value="1"/>
</dbReference>
<dbReference type="SFLD" id="SFLDS00029">
    <property type="entry name" value="Radical_SAM"/>
    <property type="match status" value="1"/>
</dbReference>
<dbReference type="SFLD" id="SFLDF00274">
    <property type="entry name" value="ribosomal_protein_S12_methylth"/>
    <property type="match status" value="1"/>
</dbReference>
<dbReference type="SMART" id="SM00729">
    <property type="entry name" value="Elp3"/>
    <property type="match status" value="1"/>
</dbReference>
<dbReference type="SUPFAM" id="SSF102114">
    <property type="entry name" value="Radical SAM enzymes"/>
    <property type="match status" value="1"/>
</dbReference>
<dbReference type="PROSITE" id="PS51449">
    <property type="entry name" value="MTTASE_N"/>
    <property type="match status" value="1"/>
</dbReference>
<dbReference type="PROSITE" id="PS01278">
    <property type="entry name" value="MTTASE_RADICAL"/>
    <property type="match status" value="1"/>
</dbReference>
<dbReference type="PROSITE" id="PS51918">
    <property type="entry name" value="RADICAL_SAM"/>
    <property type="match status" value="1"/>
</dbReference>
<dbReference type="PROSITE" id="PS50926">
    <property type="entry name" value="TRAM"/>
    <property type="match status" value="1"/>
</dbReference>
<protein>
    <recommendedName>
        <fullName evidence="1">Ribosomal protein uS12 methylthiotransferase RimO</fullName>
        <shortName evidence="1">uS12 MTTase</shortName>
        <shortName evidence="1">uS12 methylthiotransferase</shortName>
        <ecNumber evidence="1">2.8.4.4</ecNumber>
    </recommendedName>
    <alternativeName>
        <fullName evidence="1">Ribosomal protein uS12 (aspartate-C(3))-methylthiotransferase</fullName>
    </alternativeName>
    <alternativeName>
        <fullName evidence="1">Ribosome maturation factor RimO</fullName>
    </alternativeName>
</protein>
<comment type="function">
    <text evidence="1">Catalyzes the methylthiolation of an aspartic acid residue of ribosomal protein uS12.</text>
</comment>
<comment type="catalytic activity">
    <reaction evidence="1">
        <text>L-aspartate(89)-[ribosomal protein uS12]-hydrogen + (sulfur carrier)-SH + AH2 + 2 S-adenosyl-L-methionine = 3-methylsulfanyl-L-aspartate(89)-[ribosomal protein uS12]-hydrogen + (sulfur carrier)-H + 5'-deoxyadenosine + L-methionine + A + S-adenosyl-L-homocysteine + 2 H(+)</text>
        <dbReference type="Rhea" id="RHEA:37087"/>
        <dbReference type="Rhea" id="RHEA-COMP:10460"/>
        <dbReference type="Rhea" id="RHEA-COMP:10461"/>
        <dbReference type="Rhea" id="RHEA-COMP:14737"/>
        <dbReference type="Rhea" id="RHEA-COMP:14739"/>
        <dbReference type="ChEBI" id="CHEBI:13193"/>
        <dbReference type="ChEBI" id="CHEBI:15378"/>
        <dbReference type="ChEBI" id="CHEBI:17319"/>
        <dbReference type="ChEBI" id="CHEBI:17499"/>
        <dbReference type="ChEBI" id="CHEBI:29917"/>
        <dbReference type="ChEBI" id="CHEBI:29961"/>
        <dbReference type="ChEBI" id="CHEBI:57844"/>
        <dbReference type="ChEBI" id="CHEBI:57856"/>
        <dbReference type="ChEBI" id="CHEBI:59789"/>
        <dbReference type="ChEBI" id="CHEBI:64428"/>
        <dbReference type="ChEBI" id="CHEBI:73599"/>
        <dbReference type="EC" id="2.8.4.4"/>
    </reaction>
</comment>
<comment type="cofactor">
    <cofactor evidence="1">
        <name>[4Fe-4S] cluster</name>
        <dbReference type="ChEBI" id="CHEBI:49883"/>
    </cofactor>
    <text evidence="1">Binds 2 [4Fe-4S] clusters. One cluster is coordinated with 3 cysteines and an exchangeable S-adenosyl-L-methionine.</text>
</comment>
<comment type="subcellular location">
    <subcellularLocation>
        <location evidence="1">Cytoplasm</location>
    </subcellularLocation>
</comment>
<comment type="similarity">
    <text evidence="1">Belongs to the methylthiotransferase family. RimO subfamily.</text>
</comment>
<organism>
    <name type="scientific">Burkholderia mallei (strain NCTC 10229)</name>
    <dbReference type="NCBI Taxonomy" id="412022"/>
    <lineage>
        <taxon>Bacteria</taxon>
        <taxon>Pseudomonadati</taxon>
        <taxon>Pseudomonadota</taxon>
        <taxon>Betaproteobacteria</taxon>
        <taxon>Burkholderiales</taxon>
        <taxon>Burkholderiaceae</taxon>
        <taxon>Burkholderia</taxon>
        <taxon>pseudomallei group</taxon>
    </lineage>
</organism>
<accession>A2S2C9</accession>
<proteinExistence type="inferred from homology"/>
<evidence type="ECO:0000255" key="1">
    <source>
        <dbReference type="HAMAP-Rule" id="MF_01865"/>
    </source>
</evidence>
<evidence type="ECO:0000255" key="2">
    <source>
        <dbReference type="PROSITE-ProRule" id="PRU01266"/>
    </source>
</evidence>
<reference key="1">
    <citation type="journal article" date="2010" name="Genome Biol. Evol.">
        <title>Continuing evolution of Burkholderia mallei through genome reduction and large-scale rearrangements.</title>
        <authorList>
            <person name="Losada L."/>
            <person name="Ronning C.M."/>
            <person name="DeShazer D."/>
            <person name="Woods D."/>
            <person name="Fedorova N."/>
            <person name="Kim H.S."/>
            <person name="Shabalina S.A."/>
            <person name="Pearson T.R."/>
            <person name="Brinkac L."/>
            <person name="Tan P."/>
            <person name="Nandi T."/>
            <person name="Crabtree J."/>
            <person name="Badger J."/>
            <person name="Beckstrom-Sternberg S."/>
            <person name="Saqib M."/>
            <person name="Schutzer S.E."/>
            <person name="Keim P."/>
            <person name="Nierman W.C."/>
        </authorList>
    </citation>
    <scope>NUCLEOTIDE SEQUENCE [LARGE SCALE GENOMIC DNA]</scope>
    <source>
        <strain>NCTC 10229</strain>
    </source>
</reference>
<feature type="chain" id="PRO_0000374735" description="Ribosomal protein uS12 methylthiotransferase RimO">
    <location>
        <begin position="1"/>
        <end position="463"/>
    </location>
</feature>
<feature type="domain" description="MTTase N-terminal" evidence="1">
    <location>
        <begin position="15"/>
        <end position="130"/>
    </location>
</feature>
<feature type="domain" description="Radical SAM core" evidence="2">
    <location>
        <begin position="147"/>
        <end position="392"/>
    </location>
</feature>
<feature type="domain" description="TRAM" evidence="1">
    <location>
        <begin position="395"/>
        <end position="463"/>
    </location>
</feature>
<feature type="binding site" evidence="1">
    <location>
        <position position="24"/>
    </location>
    <ligand>
        <name>[4Fe-4S] cluster</name>
        <dbReference type="ChEBI" id="CHEBI:49883"/>
        <label>1</label>
    </ligand>
</feature>
<feature type="binding site" evidence="1">
    <location>
        <position position="60"/>
    </location>
    <ligand>
        <name>[4Fe-4S] cluster</name>
        <dbReference type="ChEBI" id="CHEBI:49883"/>
        <label>1</label>
    </ligand>
</feature>
<feature type="binding site" evidence="1">
    <location>
        <position position="89"/>
    </location>
    <ligand>
        <name>[4Fe-4S] cluster</name>
        <dbReference type="ChEBI" id="CHEBI:49883"/>
        <label>1</label>
    </ligand>
</feature>
<feature type="binding site" evidence="1">
    <location>
        <position position="161"/>
    </location>
    <ligand>
        <name>[4Fe-4S] cluster</name>
        <dbReference type="ChEBI" id="CHEBI:49883"/>
        <label>2</label>
        <note>4Fe-4S-S-AdoMet</note>
    </ligand>
</feature>
<feature type="binding site" evidence="1">
    <location>
        <position position="165"/>
    </location>
    <ligand>
        <name>[4Fe-4S] cluster</name>
        <dbReference type="ChEBI" id="CHEBI:49883"/>
        <label>2</label>
        <note>4Fe-4S-S-AdoMet</note>
    </ligand>
</feature>
<feature type="binding site" evidence="1">
    <location>
        <position position="168"/>
    </location>
    <ligand>
        <name>[4Fe-4S] cluster</name>
        <dbReference type="ChEBI" id="CHEBI:49883"/>
        <label>2</label>
        <note>4Fe-4S-S-AdoMet</note>
    </ligand>
</feature>